<feature type="signal peptide" description="Tat-type signal" evidence="1">
    <location>
        <begin position="1"/>
        <end position="54"/>
    </location>
</feature>
<feature type="chain" id="PRO_0000070682" description="Protein-methionine-sulfoxide reductase catalytic subunit MsrP" evidence="1">
    <location>
        <begin position="55"/>
        <end position="305"/>
    </location>
</feature>
<feature type="binding site" evidence="1">
    <location>
        <position position="69"/>
    </location>
    <ligand>
        <name>Mo-molybdopterin</name>
        <dbReference type="ChEBI" id="CHEBI:71302"/>
    </ligand>
</feature>
<feature type="binding site" evidence="1">
    <location>
        <begin position="72"/>
        <end position="73"/>
    </location>
    <ligand>
        <name>Mo-molybdopterin</name>
        <dbReference type="ChEBI" id="CHEBI:71302"/>
    </ligand>
</feature>
<feature type="binding site" evidence="1">
    <location>
        <position position="126"/>
    </location>
    <ligand>
        <name>Mo-molybdopterin</name>
        <dbReference type="ChEBI" id="CHEBI:71302"/>
    </ligand>
    <ligandPart>
        <name>Mo</name>
        <dbReference type="ChEBI" id="CHEBI:28685"/>
    </ligandPart>
</feature>
<feature type="binding site" evidence="1">
    <location>
        <position position="161"/>
    </location>
    <ligand>
        <name>Mo-molybdopterin</name>
        <dbReference type="ChEBI" id="CHEBI:71302"/>
    </ligand>
</feature>
<feature type="binding site" evidence="1">
    <location>
        <position position="209"/>
    </location>
    <ligand>
        <name>Mo-molybdopterin</name>
        <dbReference type="ChEBI" id="CHEBI:71302"/>
    </ligand>
</feature>
<feature type="binding site" evidence="1">
    <location>
        <position position="214"/>
    </location>
    <ligand>
        <name>Mo-molybdopterin</name>
        <dbReference type="ChEBI" id="CHEBI:71302"/>
    </ligand>
</feature>
<feature type="binding site" evidence="1">
    <location>
        <begin position="225"/>
        <end position="227"/>
    </location>
    <ligand>
        <name>Mo-molybdopterin</name>
        <dbReference type="ChEBI" id="CHEBI:71302"/>
    </ligand>
</feature>
<reference key="1">
    <citation type="journal article" date="2003" name="Proc. Natl. Acad. Sci. U.S.A.">
        <title>The complete genome sequence of Chromobacterium violaceum reveals remarkable and exploitable bacterial adaptability.</title>
        <authorList>
            <person name="Vasconcelos A.T.R."/>
            <person name="de Almeida D.F."/>
            <person name="Hungria M."/>
            <person name="Guimaraes C.T."/>
            <person name="Antonio R.V."/>
            <person name="Almeida F.C."/>
            <person name="de Almeida L.G.P."/>
            <person name="de Almeida R."/>
            <person name="Alves-Gomes J.A."/>
            <person name="Andrade E.M."/>
            <person name="Araripe J."/>
            <person name="de Araujo M.F.F."/>
            <person name="Astolfi-Filho S."/>
            <person name="Azevedo V."/>
            <person name="Baptista A.J."/>
            <person name="Bataus L.A.M."/>
            <person name="Batista J.S."/>
            <person name="Belo A."/>
            <person name="van den Berg C."/>
            <person name="Bogo M."/>
            <person name="Bonatto S."/>
            <person name="Bordignon J."/>
            <person name="Brigido M.M."/>
            <person name="Brito C.A."/>
            <person name="Brocchi M."/>
            <person name="Burity H.A."/>
            <person name="Camargo A.A."/>
            <person name="Cardoso D.D.P."/>
            <person name="Carneiro N.P."/>
            <person name="Carraro D.M."/>
            <person name="Carvalho C.M.B."/>
            <person name="Cascardo J.C.M."/>
            <person name="Cavada B.S."/>
            <person name="Chueire L.M.O."/>
            <person name="Creczynski-Pasa T.B."/>
            <person name="Cunha-Junior N.C."/>
            <person name="Fagundes N."/>
            <person name="Falcao C.L."/>
            <person name="Fantinatti F."/>
            <person name="Farias I.P."/>
            <person name="Felipe M.S.S."/>
            <person name="Ferrari L.P."/>
            <person name="Ferro J.A."/>
            <person name="Ferro M.I.T."/>
            <person name="Franco G.R."/>
            <person name="Freitas N.S.A."/>
            <person name="Furlan L.R."/>
            <person name="Gazzinelli R.T."/>
            <person name="Gomes E.A."/>
            <person name="Goncalves P.R."/>
            <person name="Grangeiro T.B."/>
            <person name="Grattapaglia D."/>
            <person name="Grisard E.C."/>
            <person name="Hanna E.S."/>
            <person name="Jardim S.N."/>
            <person name="Laurino J."/>
            <person name="Leoi L.C.T."/>
            <person name="Lima L.F.A."/>
            <person name="Loureiro M.F."/>
            <person name="Lyra M.C.C.P."/>
            <person name="Madeira H.M.F."/>
            <person name="Manfio G.P."/>
            <person name="Maranhao A.Q."/>
            <person name="Martins W.S."/>
            <person name="di Mauro S.M.Z."/>
            <person name="de Medeiros S.R.B."/>
            <person name="Meissner R.V."/>
            <person name="Moreira M.A.M."/>
            <person name="Nascimento F.F."/>
            <person name="Nicolas M.F."/>
            <person name="Oliveira J.G."/>
            <person name="Oliveira S.C."/>
            <person name="Paixao R.F.C."/>
            <person name="Parente J.A."/>
            <person name="Pedrosa F.O."/>
            <person name="Pena S.D.J."/>
            <person name="Pereira J.O."/>
            <person name="Pereira M."/>
            <person name="Pinto L.S.R.C."/>
            <person name="Pinto L.S."/>
            <person name="Porto J.I.R."/>
            <person name="Potrich D.P."/>
            <person name="Ramalho-Neto C.E."/>
            <person name="Reis A.M.M."/>
            <person name="Rigo L.U."/>
            <person name="Rondinelli E."/>
            <person name="Santos E.B.P."/>
            <person name="Santos F.R."/>
            <person name="Schneider M.P.C."/>
            <person name="Seuanez H.N."/>
            <person name="Silva A.M.R."/>
            <person name="da Silva A.L.C."/>
            <person name="Silva D.W."/>
            <person name="Silva R."/>
            <person name="Simoes I.C."/>
            <person name="Simon D."/>
            <person name="Soares C.M.A."/>
            <person name="Soares R.B.A."/>
            <person name="Souza E.M."/>
            <person name="Souza K.R.L."/>
            <person name="Souza R.C."/>
            <person name="Steffens M.B.R."/>
            <person name="Steindel M."/>
            <person name="Teixeira S.R."/>
            <person name="Urmenyi T."/>
            <person name="Vettore A."/>
            <person name="Wassem R."/>
            <person name="Zaha A."/>
            <person name="Simpson A.J.G."/>
        </authorList>
    </citation>
    <scope>NUCLEOTIDE SEQUENCE [LARGE SCALE GENOMIC DNA]</scope>
    <source>
        <strain>ATCC 12472 / DSM 30191 / JCM 1249 / CCUG 213 / NBRC 12614 / NCIMB 9131 / NCTC 9757 / MK</strain>
    </source>
</reference>
<organism>
    <name type="scientific">Chromobacterium violaceum (strain ATCC 12472 / DSM 30191 / JCM 1249 / CCUG 213 / NBRC 12614 / NCIMB 9131 / NCTC 9757 / MK)</name>
    <dbReference type="NCBI Taxonomy" id="243365"/>
    <lineage>
        <taxon>Bacteria</taxon>
        <taxon>Pseudomonadati</taxon>
        <taxon>Pseudomonadota</taxon>
        <taxon>Betaproteobacteria</taxon>
        <taxon>Neisseriales</taxon>
        <taxon>Chromobacteriaceae</taxon>
        <taxon>Chromobacterium</taxon>
    </lineage>
</organism>
<evidence type="ECO:0000255" key="1">
    <source>
        <dbReference type="HAMAP-Rule" id="MF_01206"/>
    </source>
</evidence>
<protein>
    <recommendedName>
        <fullName evidence="1">Protein-methionine-sulfoxide reductase catalytic subunit MsrP</fullName>
        <ecNumber evidence="1">1.8.5.-</ecNumber>
    </recommendedName>
</protein>
<proteinExistence type="inferred from homology"/>
<comment type="function">
    <text evidence="1">Part of the MsrPQ system that repairs oxidized periplasmic proteins containing methionine sulfoxide residues (Met-O), using respiratory chain electrons. Thus protects these proteins from oxidative-stress damage caused by reactive species of oxygen and chlorine generated by the host defense mechanisms. MsrPQ is essential for the maintenance of envelope integrity under bleach stress, rescuing a wide series of structurally unrelated periplasmic proteins from methionine oxidation. The catalytic subunit MsrP is non-stereospecific, being able to reduce both (R-) and (S-) diastereoisomers of methionine sulfoxide.</text>
</comment>
<comment type="catalytic activity">
    <reaction evidence="1">
        <text>L-methionyl-[protein] + a quinone + H2O = L-methionyl-(S)-S-oxide-[protein] + a quinol</text>
        <dbReference type="Rhea" id="RHEA:51292"/>
        <dbReference type="Rhea" id="RHEA-COMP:12313"/>
        <dbReference type="Rhea" id="RHEA-COMP:12315"/>
        <dbReference type="ChEBI" id="CHEBI:15377"/>
        <dbReference type="ChEBI" id="CHEBI:16044"/>
        <dbReference type="ChEBI" id="CHEBI:24646"/>
        <dbReference type="ChEBI" id="CHEBI:44120"/>
        <dbReference type="ChEBI" id="CHEBI:132124"/>
    </reaction>
</comment>
<comment type="catalytic activity">
    <reaction evidence="1">
        <text>L-methionyl-[protein] + a quinone + H2O = L-methionyl-(R)-S-oxide-[protein] + a quinol</text>
        <dbReference type="Rhea" id="RHEA:51296"/>
        <dbReference type="Rhea" id="RHEA-COMP:12313"/>
        <dbReference type="Rhea" id="RHEA-COMP:12314"/>
        <dbReference type="ChEBI" id="CHEBI:15377"/>
        <dbReference type="ChEBI" id="CHEBI:16044"/>
        <dbReference type="ChEBI" id="CHEBI:24646"/>
        <dbReference type="ChEBI" id="CHEBI:45764"/>
        <dbReference type="ChEBI" id="CHEBI:132124"/>
    </reaction>
</comment>
<comment type="cofactor">
    <cofactor evidence="1">
        <name>Mo-molybdopterin</name>
        <dbReference type="ChEBI" id="CHEBI:71302"/>
    </cofactor>
    <text evidence="1">Binds 1 Mo-molybdopterin (Mo-MPT) cofactor per subunit.</text>
</comment>
<comment type="subunit">
    <text evidence="1">Heterodimer of a catalytic subunit (MsrP) and a heme-binding subunit (MsrQ).</text>
</comment>
<comment type="subcellular location">
    <subcellularLocation>
        <location evidence="1">Periplasm</location>
    </subcellularLocation>
    <text evidence="1">Is attached to the inner membrane when interacting with the MsrQ subunit.</text>
</comment>
<comment type="PTM">
    <text evidence="1">Predicted to be exported by the Tat system. The position of the signal peptide cleavage has not been experimentally proven.</text>
</comment>
<comment type="similarity">
    <text evidence="1">Belongs to the MsrP family.</text>
</comment>
<accession>Q7NZY0</accession>
<name>MSRP_CHRVO</name>
<sequence length="305" mass="34708">MLIRKPADHLPSEITSESVYFNRRQFMAGAAGLLLSAETLAGLAAKKSPLSQLAANDKPNSLKDITSYNNFYEFGTDKSDPAENAHTLRARPWSVLVDGEVAKPRRFSIEELLKFPLEERVYRLRCVEGWSMVIPWVGFPLASLIKQMNPTSRAKYVAFETLQRPSEMPGQRQAVLDWPYREGLRIDEVMHPLAILAVGLYGNALPNQNGAPIRLVVPWKYGFKSIKSIVRIRLQETMPATSWNMANAHEYGFYSNVNPDVDHPRWSQASERRIGEFFKRKTLPFNGYAEQVAGLYRGMDLRKNF</sequence>
<dbReference type="EC" id="1.8.5.-" evidence="1"/>
<dbReference type="EMBL" id="AE016825">
    <property type="protein sequence ID" value="AAQ58465.1"/>
    <property type="molecule type" value="Genomic_DNA"/>
</dbReference>
<dbReference type="RefSeq" id="WP_011134344.1">
    <property type="nucleotide sequence ID" value="NC_005085.1"/>
</dbReference>
<dbReference type="SMR" id="Q7NZY0"/>
<dbReference type="STRING" id="243365.CV_0789"/>
<dbReference type="KEGG" id="cvi:CV_0789"/>
<dbReference type="eggNOG" id="COG2041">
    <property type="taxonomic scope" value="Bacteria"/>
</dbReference>
<dbReference type="HOGENOM" id="CLU_045520_0_0_4"/>
<dbReference type="OrthoDB" id="9795587at2"/>
<dbReference type="Proteomes" id="UP000001424">
    <property type="component" value="Chromosome"/>
</dbReference>
<dbReference type="GO" id="GO:0042597">
    <property type="term" value="C:periplasmic space"/>
    <property type="evidence" value="ECO:0007669"/>
    <property type="project" value="UniProtKB-SubCell"/>
</dbReference>
<dbReference type="GO" id="GO:0046872">
    <property type="term" value="F:metal ion binding"/>
    <property type="evidence" value="ECO:0007669"/>
    <property type="project" value="UniProtKB-KW"/>
</dbReference>
<dbReference type="GO" id="GO:0043546">
    <property type="term" value="F:molybdopterin cofactor binding"/>
    <property type="evidence" value="ECO:0007669"/>
    <property type="project" value="UniProtKB-UniRule"/>
</dbReference>
<dbReference type="GO" id="GO:0016672">
    <property type="term" value="F:oxidoreductase activity, acting on a sulfur group of donors, quinone or similar compound as acceptor"/>
    <property type="evidence" value="ECO:0007669"/>
    <property type="project" value="UniProtKB-UniRule"/>
</dbReference>
<dbReference type="GO" id="GO:0030091">
    <property type="term" value="P:protein repair"/>
    <property type="evidence" value="ECO:0007669"/>
    <property type="project" value="UniProtKB-UniRule"/>
</dbReference>
<dbReference type="Gene3D" id="3.90.420.10">
    <property type="entry name" value="Oxidoreductase, molybdopterin-binding domain"/>
    <property type="match status" value="1"/>
</dbReference>
<dbReference type="HAMAP" id="MF_01206">
    <property type="entry name" value="MsrP"/>
    <property type="match status" value="1"/>
</dbReference>
<dbReference type="InterPro" id="IPR022867">
    <property type="entry name" value="MsrP"/>
</dbReference>
<dbReference type="InterPro" id="IPR000572">
    <property type="entry name" value="OxRdtase_Mopterin-bd_dom"/>
</dbReference>
<dbReference type="InterPro" id="IPR036374">
    <property type="entry name" value="OxRdtase_Mopterin-bd_sf"/>
</dbReference>
<dbReference type="NCBIfam" id="NF003767">
    <property type="entry name" value="PRK05363.1"/>
    <property type="match status" value="1"/>
</dbReference>
<dbReference type="PANTHER" id="PTHR43032">
    <property type="entry name" value="PROTEIN-METHIONINE-SULFOXIDE REDUCTASE"/>
    <property type="match status" value="1"/>
</dbReference>
<dbReference type="PANTHER" id="PTHR43032:SF3">
    <property type="entry name" value="PROTEIN-METHIONINE-SULFOXIDE REDUCTASE CATALYTIC SUBUNIT MSRP"/>
    <property type="match status" value="1"/>
</dbReference>
<dbReference type="Pfam" id="PF00174">
    <property type="entry name" value="Oxidored_molyb"/>
    <property type="match status" value="1"/>
</dbReference>
<dbReference type="SUPFAM" id="SSF56524">
    <property type="entry name" value="Oxidoreductase molybdopterin-binding domain"/>
    <property type="match status" value="1"/>
</dbReference>
<gene>
    <name evidence="1" type="primary">msrP</name>
    <name type="ordered locus">CV_0789</name>
</gene>
<keyword id="KW-0479">Metal-binding</keyword>
<keyword id="KW-0500">Molybdenum</keyword>
<keyword id="KW-0560">Oxidoreductase</keyword>
<keyword id="KW-0574">Periplasm</keyword>
<keyword id="KW-1185">Reference proteome</keyword>
<keyword id="KW-0732">Signal</keyword>